<protein>
    <recommendedName>
        <fullName>Potassium/sodium hyperpolarization-activated cyclic nucleotide-gated channel 4</fullName>
    </recommendedName>
</protein>
<accession>Q9JKA7</accession>
<accession>Q9QZW4</accession>
<sequence length="1198" mass="128761">MDKLPPSMRKRLYSLPQQVGAKAWIMDEEEDGEEEGAGGLQDPSRRSIRLRPLPSPSPSVAAGCSESRGAALGAADSEGPGRSAGKSSTNGDCRRFRGSLASLGSRGGGSGGAGGGSSLGHLHDSAEERRLIAAEGDASPGEDRTPPGLATEPERPGAAAQPAASPPPQQPPQPASASCEQPSADTAIKVEGGAAASDQILPEAEVRLGQSGFMQRQFGAMLQPGVNKFSLRMFGSQKAVEREQERVKSAGFWIIHPYSDFRFYWDLTMLLLMVGNLIIIPVGITFFKDENTTPWIVFNVVSDTFFLIDLVLNFRTGIVVEDNTEIILDPQRIKMKYLKSWFVVDFISSIPVDYIFLIVETRIDSEVYKTARALRIVRFTKILSLLRLLRLSRLIRYIHQWEEIFHMTYDLASAVVRIVNLIGMMLLLCHWDGCLQFLVPMLQDFPHDCWVSINGMVNNSWGKQYSYALFKAMSHMLCIGYGRQAPVGMSDVWLTMLSMIVGATCYAMFIGHATALIQSLDSSRRQYQEKYKQVEQYMSFHKLPPDTRQRIHDYYEHRYQGKMFDEESILGELSEPLREEIINFNCRKLVASMPLFANADPNFVTSMLTKLRFEVFQPGDYIIREGTIGKKMYFIQHGVVSVLTKGNKETKLADGSYFGEICLLTRGRRTASVRADTYCRLYSLSVDNFNEVLEEYPMMRRAFETVALDRLDRIGKKNSILLHKVQHDLNSGVFNYQENEIIQQIVRHDREMAHCAHRVQAAASATPTPTPVIWTPLIQAPLQAAAATTSVAIALTHHPRLPAAIFRPPPGPGLGNLGAGQTPRHPRRLQSLIPSALGSASPASSPSQVDTPSSSSFHIQQLAGFSAPPGLSPLLPSSSSSPPPGACSSPPAPTPSTSTAATTTGFGHFHKALGGSLSSSDSPLLTPLQPGARSPQAAQPPPPLPGARGGLGLLEHFLPPPPSSRSPSSSPGQLGQPPGELSPGLAAGPPSTPETPPRPERPSFMAGASGGASPVAFTPRGGLSPPGHSPGPPRTFPSAPPRASGSHGSLLLPPASSPPPPQVPQRRGTPPLTPGRLTQDLKLISASQPALPQDGAQTLRRASPHSSGESMAAFSLYPRAGGGSGSSGGLGPPGRPYGAIPGQHVTLPRKTSSGSLPPPLSLFGARAASSGGPPLTAAPQREPGARSEPVRSKLPSNL</sequence>
<name>HCN4_RAT</name>
<reference key="1">
    <citation type="journal article" date="2000" name="Brain Res. Mol. Brain Res.">
        <title>Cloning and localization of the hyperpolarization-activated cyclic nucleotide-gated channel family in rat brain.</title>
        <authorList>
            <person name="Monteggia L.M."/>
            <person name="Eisch A.J."/>
            <person name="Tang M.D."/>
            <person name="Kaczmarek L.K."/>
            <person name="Nestler E.J."/>
        </authorList>
    </citation>
    <scope>NUCLEOTIDE SEQUENCE [MRNA]</scope>
    <scope>TISSUE SPECIFICITY</scope>
    <source>
        <strain>Sprague-Dawley</strain>
        <tissue>Brain</tissue>
    </source>
</reference>
<reference key="2">
    <citation type="journal article" date="1999" name="Circ. Res.">
        <title>Distribution and prevalence of hyperpolarization-activated cation channel (HCN) mRNA expression in cardiac tissues.</title>
        <authorList>
            <person name="Shi W."/>
            <person name="Wymore R."/>
            <person name="Yu H."/>
            <person name="Wu J."/>
            <person name="Wymore R.T."/>
            <person name="Pan Z."/>
            <person name="Robinson R.B."/>
            <person name="Dixon J.E."/>
            <person name="McKinnon D."/>
            <person name="Cohen I.S."/>
        </authorList>
    </citation>
    <scope>NUCLEOTIDE SEQUENCE [MRNA] OF 262-428</scope>
    <source>
        <tissue>Heart</tissue>
    </source>
</reference>
<reference key="3">
    <citation type="journal article" date="2001" name="Nature">
        <title>Hyperpolarization-activated channels HCN1 and HCN4 mediate responses to sour stimuli.</title>
        <authorList>
            <person name="Stevens D.R."/>
            <person name="Seifert R."/>
            <person name="Bufe B."/>
            <person name="Mueller F."/>
            <person name="Kremmer E."/>
            <person name="Gauss R."/>
            <person name="Meyerhof W."/>
            <person name="Kaupp U.B."/>
            <person name="Lindemann B."/>
        </authorList>
    </citation>
    <scope>FUNCTION</scope>
    <scope>SUBCELLULAR LOCATION</scope>
    <scope>TISSUE SPECIFICITY</scope>
</reference>
<reference key="4">
    <citation type="journal article" date="2012" name="Nat. Commun.">
        <title>Quantitative maps of protein phosphorylation sites across 14 different rat organs and tissues.</title>
        <authorList>
            <person name="Lundby A."/>
            <person name="Secher A."/>
            <person name="Lage K."/>
            <person name="Nordsborg N.B."/>
            <person name="Dmytriyev A."/>
            <person name="Lundby C."/>
            <person name="Olsen J.V."/>
        </authorList>
    </citation>
    <scope>PHOSPHORYLATION [LARGE SCALE ANALYSIS] AT SER-139</scope>
    <scope>IDENTIFICATION BY MASS SPECTROMETRY [LARGE SCALE ANALYSIS]</scope>
</reference>
<dbReference type="EMBL" id="AF247453">
    <property type="protein sequence ID" value="AAF62176.1"/>
    <property type="molecule type" value="mRNA"/>
</dbReference>
<dbReference type="EMBL" id="AF155166">
    <property type="protein sequence ID" value="AAF01493.1"/>
    <property type="molecule type" value="mRNA"/>
</dbReference>
<dbReference type="RefSeq" id="NP_067690.1">
    <property type="nucleotide sequence ID" value="NM_021658.2"/>
</dbReference>
<dbReference type="SMR" id="Q9JKA7"/>
<dbReference type="FunCoup" id="Q9JKA7">
    <property type="interactions" value="88"/>
</dbReference>
<dbReference type="STRING" id="10116.ENSRNOP00000012644"/>
<dbReference type="GlyCosmos" id="Q9JKA7">
    <property type="glycosylation" value="1 site, No reported glycans"/>
</dbReference>
<dbReference type="GlyGen" id="Q9JKA7">
    <property type="glycosylation" value="4 sites"/>
</dbReference>
<dbReference type="iPTMnet" id="Q9JKA7"/>
<dbReference type="PhosphoSitePlus" id="Q9JKA7"/>
<dbReference type="SwissPalm" id="Q9JKA7"/>
<dbReference type="PaxDb" id="10116-ENSRNOP00000012644"/>
<dbReference type="ABCD" id="Q9JKA7">
    <property type="antibodies" value="1 sequenced antibody"/>
</dbReference>
<dbReference type="Ensembl" id="ENSRNOT00000012644.5">
    <property type="protein sequence ID" value="ENSRNOP00000012644.5"/>
    <property type="gene ID" value="ENSRNOG00000009450.5"/>
</dbReference>
<dbReference type="GeneID" id="59266"/>
<dbReference type="KEGG" id="rno:59266"/>
<dbReference type="UCSC" id="RGD:71065">
    <property type="organism name" value="rat"/>
</dbReference>
<dbReference type="AGR" id="RGD:71065"/>
<dbReference type="CTD" id="10021"/>
<dbReference type="RGD" id="71065">
    <property type="gene designation" value="Hcn4"/>
</dbReference>
<dbReference type="eggNOG" id="KOG0498">
    <property type="taxonomic scope" value="Eukaryota"/>
</dbReference>
<dbReference type="GeneTree" id="ENSGT00940000154743"/>
<dbReference type="HOGENOM" id="CLU_005746_15_0_1"/>
<dbReference type="InParanoid" id="Q9JKA7"/>
<dbReference type="OrthoDB" id="87205at9989"/>
<dbReference type="PhylomeDB" id="Q9JKA7"/>
<dbReference type="TreeFam" id="TF318250"/>
<dbReference type="Reactome" id="R-RNO-1296061">
    <property type="pathway name" value="HCN channels"/>
</dbReference>
<dbReference type="PRO" id="PR:Q9JKA7"/>
<dbReference type="Proteomes" id="UP000002494">
    <property type="component" value="Chromosome 8"/>
</dbReference>
<dbReference type="GO" id="GO:0030424">
    <property type="term" value="C:axon"/>
    <property type="evidence" value="ECO:0000266"/>
    <property type="project" value="RGD"/>
</dbReference>
<dbReference type="GO" id="GO:0016323">
    <property type="term" value="C:basolateral plasma membrane"/>
    <property type="evidence" value="ECO:0000314"/>
    <property type="project" value="RGD"/>
</dbReference>
<dbReference type="GO" id="GO:0030425">
    <property type="term" value="C:dendrite"/>
    <property type="evidence" value="ECO:0000318"/>
    <property type="project" value="GO_Central"/>
</dbReference>
<dbReference type="GO" id="GO:0098855">
    <property type="term" value="C:HCN channel complex"/>
    <property type="evidence" value="ECO:0000266"/>
    <property type="project" value="RGD"/>
</dbReference>
<dbReference type="GO" id="GO:0043025">
    <property type="term" value="C:neuronal cell body"/>
    <property type="evidence" value="ECO:0000314"/>
    <property type="project" value="RGD"/>
</dbReference>
<dbReference type="GO" id="GO:0048471">
    <property type="term" value="C:perinuclear region of cytoplasm"/>
    <property type="evidence" value="ECO:0000266"/>
    <property type="project" value="RGD"/>
</dbReference>
<dbReference type="GO" id="GO:0005886">
    <property type="term" value="C:plasma membrane"/>
    <property type="evidence" value="ECO:0000250"/>
    <property type="project" value="UniProtKB"/>
</dbReference>
<dbReference type="GO" id="GO:0043195">
    <property type="term" value="C:terminal bouton"/>
    <property type="evidence" value="ECO:0000314"/>
    <property type="project" value="RGD"/>
</dbReference>
<dbReference type="GO" id="GO:0030552">
    <property type="term" value="F:cAMP binding"/>
    <property type="evidence" value="ECO:0007669"/>
    <property type="project" value="UniProtKB-KW"/>
</dbReference>
<dbReference type="GO" id="GO:0042802">
    <property type="term" value="F:identical protein binding"/>
    <property type="evidence" value="ECO:0000266"/>
    <property type="project" value="RGD"/>
</dbReference>
<dbReference type="GO" id="GO:0005222">
    <property type="term" value="F:intracellularly cAMP-activated cation channel activity"/>
    <property type="evidence" value="ECO:0000250"/>
    <property type="project" value="UniProtKB"/>
</dbReference>
<dbReference type="GO" id="GO:0005267">
    <property type="term" value="F:potassium channel activity"/>
    <property type="evidence" value="ECO:0000304"/>
    <property type="project" value="RGD"/>
</dbReference>
<dbReference type="GO" id="GO:0005249">
    <property type="term" value="F:voltage-gated potassium channel activity"/>
    <property type="evidence" value="ECO:0000250"/>
    <property type="project" value="UniProtKB"/>
</dbReference>
<dbReference type="GO" id="GO:0086041">
    <property type="term" value="F:voltage-gated potassium channel activity involved in SA node cell action potential depolarization"/>
    <property type="evidence" value="ECO:0000266"/>
    <property type="project" value="RGD"/>
</dbReference>
<dbReference type="GO" id="GO:0005248">
    <property type="term" value="F:voltage-gated sodium channel activity"/>
    <property type="evidence" value="ECO:0000266"/>
    <property type="project" value="RGD"/>
</dbReference>
<dbReference type="GO" id="GO:1904045">
    <property type="term" value="P:cellular response to aldosterone"/>
    <property type="evidence" value="ECO:0000270"/>
    <property type="project" value="RGD"/>
</dbReference>
<dbReference type="GO" id="GO:0071320">
    <property type="term" value="P:cellular response to cAMP"/>
    <property type="evidence" value="ECO:0000250"/>
    <property type="project" value="UniProtKB"/>
</dbReference>
<dbReference type="GO" id="GO:0071321">
    <property type="term" value="P:cellular response to cGMP"/>
    <property type="evidence" value="ECO:0000266"/>
    <property type="project" value="RGD"/>
</dbReference>
<dbReference type="GO" id="GO:0001701">
    <property type="term" value="P:in utero embryonic development"/>
    <property type="evidence" value="ECO:0000266"/>
    <property type="project" value="RGD"/>
</dbReference>
<dbReference type="GO" id="GO:0086046">
    <property type="term" value="P:membrane depolarization during SA node cell action potential"/>
    <property type="evidence" value="ECO:0000266"/>
    <property type="project" value="RGD"/>
</dbReference>
<dbReference type="GO" id="GO:0050804">
    <property type="term" value="P:modulation of chemical synaptic transmission"/>
    <property type="evidence" value="ECO:0000304"/>
    <property type="project" value="RGD"/>
</dbReference>
<dbReference type="GO" id="GO:0006812">
    <property type="term" value="P:monoatomic cation transport"/>
    <property type="evidence" value="ECO:0000266"/>
    <property type="project" value="RGD"/>
</dbReference>
<dbReference type="GO" id="GO:1990573">
    <property type="term" value="P:potassium ion import across plasma membrane"/>
    <property type="evidence" value="ECO:0000266"/>
    <property type="project" value="RGD"/>
</dbReference>
<dbReference type="GO" id="GO:0071805">
    <property type="term" value="P:potassium ion transmembrane transport"/>
    <property type="evidence" value="ECO:0000250"/>
    <property type="project" value="UniProtKB"/>
</dbReference>
<dbReference type="GO" id="GO:0098909">
    <property type="term" value="P:regulation of cardiac muscle cell action potential involved in regulation of contraction"/>
    <property type="evidence" value="ECO:0000266"/>
    <property type="project" value="RGD"/>
</dbReference>
<dbReference type="GO" id="GO:0055117">
    <property type="term" value="P:regulation of cardiac muscle contraction"/>
    <property type="evidence" value="ECO:0000266"/>
    <property type="project" value="RGD"/>
</dbReference>
<dbReference type="GO" id="GO:0008016">
    <property type="term" value="P:regulation of heart contraction"/>
    <property type="evidence" value="ECO:0000266"/>
    <property type="project" value="RGD"/>
</dbReference>
<dbReference type="GO" id="GO:0002027">
    <property type="term" value="P:regulation of heart rate"/>
    <property type="evidence" value="ECO:0000250"/>
    <property type="project" value="UniProtKB"/>
</dbReference>
<dbReference type="GO" id="GO:0086091">
    <property type="term" value="P:regulation of heart rate by cardiac conduction"/>
    <property type="evidence" value="ECO:0000266"/>
    <property type="project" value="RGD"/>
</dbReference>
<dbReference type="GO" id="GO:0003254">
    <property type="term" value="P:regulation of membrane depolarization"/>
    <property type="evidence" value="ECO:0000266"/>
    <property type="project" value="RGD"/>
</dbReference>
<dbReference type="GO" id="GO:0042391">
    <property type="term" value="P:regulation of membrane potential"/>
    <property type="evidence" value="ECO:0000266"/>
    <property type="project" value="RGD"/>
</dbReference>
<dbReference type="GO" id="GO:0086015">
    <property type="term" value="P:SA node cell action potential"/>
    <property type="evidence" value="ECO:0000266"/>
    <property type="project" value="RGD"/>
</dbReference>
<dbReference type="GO" id="GO:0098719">
    <property type="term" value="P:sodium ion import across plasma membrane"/>
    <property type="evidence" value="ECO:0000266"/>
    <property type="project" value="RGD"/>
</dbReference>
<dbReference type="GO" id="GO:0035725">
    <property type="term" value="P:sodium ion transmembrane transport"/>
    <property type="evidence" value="ECO:0000266"/>
    <property type="project" value="RGD"/>
</dbReference>
<dbReference type="CDD" id="cd00038">
    <property type="entry name" value="CAP_ED"/>
    <property type="match status" value="1"/>
</dbReference>
<dbReference type="FunFam" id="1.10.287.70:FF:000031">
    <property type="entry name" value="Potassium/sodium hyperpolarization-activated cyclic nucleotide-gated channel 1, putative"/>
    <property type="match status" value="1"/>
</dbReference>
<dbReference type="FunFam" id="1.10.287.630:FF:000002">
    <property type="entry name" value="Potassium/sodium hyperpolarization-activated cyclic nucleotide-gated channel 4"/>
    <property type="match status" value="1"/>
</dbReference>
<dbReference type="FunFam" id="2.60.120.10:FF:000007">
    <property type="entry name" value="Putative potassium/sodium hyperpolarization-activated cyclic nucleotide-gated channel 2"/>
    <property type="match status" value="1"/>
</dbReference>
<dbReference type="Gene3D" id="1.10.287.70">
    <property type="match status" value="1"/>
</dbReference>
<dbReference type="Gene3D" id="1.10.287.630">
    <property type="entry name" value="Helix hairpin bin"/>
    <property type="match status" value="1"/>
</dbReference>
<dbReference type="Gene3D" id="2.60.120.10">
    <property type="entry name" value="Jelly Rolls"/>
    <property type="match status" value="1"/>
</dbReference>
<dbReference type="InterPro" id="IPR018488">
    <property type="entry name" value="cNMP-bd_CS"/>
</dbReference>
<dbReference type="InterPro" id="IPR000595">
    <property type="entry name" value="cNMP-bd_dom"/>
</dbReference>
<dbReference type="InterPro" id="IPR018490">
    <property type="entry name" value="cNMP-bd_dom_sf"/>
</dbReference>
<dbReference type="InterPro" id="IPR005821">
    <property type="entry name" value="Ion_trans_dom"/>
</dbReference>
<dbReference type="InterPro" id="IPR013621">
    <property type="entry name" value="Ion_trans_N"/>
</dbReference>
<dbReference type="InterPro" id="IPR051413">
    <property type="entry name" value="K/Na_HCN_channel"/>
</dbReference>
<dbReference type="InterPro" id="IPR003938">
    <property type="entry name" value="K_chnl_volt-dep_EAG/ELK/ERG"/>
</dbReference>
<dbReference type="InterPro" id="IPR014710">
    <property type="entry name" value="RmlC-like_jellyroll"/>
</dbReference>
<dbReference type="PANTHER" id="PTHR45689">
    <property type="entry name" value="I[[H]] CHANNEL, ISOFORM E"/>
    <property type="match status" value="1"/>
</dbReference>
<dbReference type="PANTHER" id="PTHR45689:SF4">
    <property type="entry name" value="POTASSIUM_SODIUM HYPERPOLARIZATION-ACTIVATED CYCLIC NUCLEOTIDE-GATED CHANNEL 4"/>
    <property type="match status" value="1"/>
</dbReference>
<dbReference type="Pfam" id="PF00027">
    <property type="entry name" value="cNMP_binding"/>
    <property type="match status" value="1"/>
</dbReference>
<dbReference type="Pfam" id="PF00520">
    <property type="entry name" value="Ion_trans"/>
    <property type="match status" value="1"/>
</dbReference>
<dbReference type="Pfam" id="PF08412">
    <property type="entry name" value="Ion_trans_N"/>
    <property type="match status" value="1"/>
</dbReference>
<dbReference type="PRINTS" id="PR01463">
    <property type="entry name" value="EAGCHANLFMLY"/>
</dbReference>
<dbReference type="SMART" id="SM00100">
    <property type="entry name" value="cNMP"/>
    <property type="match status" value="1"/>
</dbReference>
<dbReference type="SUPFAM" id="SSF51206">
    <property type="entry name" value="cAMP-binding domain-like"/>
    <property type="match status" value="1"/>
</dbReference>
<dbReference type="SUPFAM" id="SSF81324">
    <property type="entry name" value="Voltage-gated potassium channels"/>
    <property type="match status" value="1"/>
</dbReference>
<dbReference type="PROSITE" id="PS00888">
    <property type="entry name" value="CNMP_BINDING_1"/>
    <property type="match status" value="1"/>
</dbReference>
<dbReference type="PROSITE" id="PS50042">
    <property type="entry name" value="CNMP_BINDING_3"/>
    <property type="match status" value="1"/>
</dbReference>
<organism>
    <name type="scientific">Rattus norvegicus</name>
    <name type="common">Rat</name>
    <dbReference type="NCBI Taxonomy" id="10116"/>
    <lineage>
        <taxon>Eukaryota</taxon>
        <taxon>Metazoa</taxon>
        <taxon>Chordata</taxon>
        <taxon>Craniata</taxon>
        <taxon>Vertebrata</taxon>
        <taxon>Euteleostomi</taxon>
        <taxon>Mammalia</taxon>
        <taxon>Eutheria</taxon>
        <taxon>Euarchontoglires</taxon>
        <taxon>Glires</taxon>
        <taxon>Rodentia</taxon>
        <taxon>Myomorpha</taxon>
        <taxon>Muroidea</taxon>
        <taxon>Muridae</taxon>
        <taxon>Murinae</taxon>
        <taxon>Rattus</taxon>
    </lineage>
</organism>
<proteinExistence type="evidence at protein level"/>
<evidence type="ECO:0000250" key="1"/>
<evidence type="ECO:0000250" key="2">
    <source>
        <dbReference type="UniProtKB" id="O70507"/>
    </source>
</evidence>
<evidence type="ECO:0000250" key="3">
    <source>
        <dbReference type="UniProtKB" id="Q9TV66"/>
    </source>
</evidence>
<evidence type="ECO:0000250" key="4">
    <source>
        <dbReference type="UniProtKB" id="Q9Y3Q4"/>
    </source>
</evidence>
<evidence type="ECO:0000255" key="5"/>
<evidence type="ECO:0000256" key="6">
    <source>
        <dbReference type="SAM" id="MobiDB-lite"/>
    </source>
</evidence>
<evidence type="ECO:0000269" key="7">
    <source>
    </source>
</evidence>
<evidence type="ECO:0000269" key="8">
    <source>
    </source>
</evidence>
<evidence type="ECO:0000305" key="9"/>
<evidence type="ECO:0007744" key="10">
    <source>
    </source>
</evidence>
<keyword id="KW-0114">cAMP</keyword>
<keyword id="KW-0116">cAMP-binding</keyword>
<keyword id="KW-1003">Cell membrane</keyword>
<keyword id="KW-0325">Glycoprotein</keyword>
<keyword id="KW-0407">Ion channel</keyword>
<keyword id="KW-0406">Ion transport</keyword>
<keyword id="KW-1071">Ligand-gated ion channel</keyword>
<keyword id="KW-0472">Membrane</keyword>
<keyword id="KW-0547">Nucleotide-binding</keyword>
<keyword id="KW-0597">Phosphoprotein</keyword>
<keyword id="KW-0630">Potassium</keyword>
<keyword id="KW-0631">Potassium channel</keyword>
<keyword id="KW-0633">Potassium transport</keyword>
<keyword id="KW-1185">Reference proteome</keyword>
<keyword id="KW-0915">Sodium</keyword>
<keyword id="KW-0894">Sodium channel</keyword>
<keyword id="KW-0739">Sodium transport</keyword>
<keyword id="KW-0812">Transmembrane</keyword>
<keyword id="KW-1133">Transmembrane helix</keyword>
<keyword id="KW-0813">Transport</keyword>
<keyword id="KW-0851">Voltage-gated channel</keyword>
<gene>
    <name type="primary">Hcn4</name>
</gene>
<comment type="function">
    <text evidence="4 8">Hyperpolarization-activated ion channel that are permeable to Na(+) and K(+) ions with very slow activation and inactivation. Exhibits higher selectivity for K(+) over Na(+) ions. Contributes to the native pacemaker currents in heart (If) that regulate the rhythm of heart beat. Contributes to the native pacemaker currents in neurons (Ih) (By similarity). May mediate responses to sour stimuli (PubMed:11675786).</text>
</comment>
<comment type="catalytic activity">
    <reaction evidence="4">
        <text>K(+)(in) = K(+)(out)</text>
        <dbReference type="Rhea" id="RHEA:29463"/>
        <dbReference type="ChEBI" id="CHEBI:29103"/>
    </reaction>
</comment>
<comment type="catalytic activity">
    <reaction evidence="4">
        <text>Na(+)(in) = Na(+)(out)</text>
        <dbReference type="Rhea" id="RHEA:34963"/>
        <dbReference type="ChEBI" id="CHEBI:29101"/>
    </reaction>
</comment>
<comment type="activity regulation">
    <text evidence="2 4">Activated by cAMP and at 100 times higher concentrationsand to a lesser extent by cGMP and cCMP. cAMP binding causes a conformation change that leads to the assembly of an active tetramer and channel opening. Binding of cAMP removes a tonic inhibition conferred by cyclic nucleotide-binding domain (CNBD) on channel opening. Cyclic dinucleotides can modulate HCN4 channel; cyclic dinucleotides acting as potent antagonists of cAMP. Inhibited by extracellular Cs(+) ions (By similarity). Auxiliary subunits can also regulate HCN4 channel. IRAG1 causes a gain-of-function by shifting HCN4 activation to more depolarized membrane potentials in the absence of cAMP. In contrast, IRAG2 causes a loss-of-function by inhibiting cAMP-dependent potentiation of HCN4 activation (By similarity).</text>
</comment>
<comment type="subunit">
    <text evidence="2 3 4">Homotetramer (By similarity). The potassium channel is composed of a homo- or heterotetrameric complex of pore-forming subunits (By similarity). Interacts with PEX5L with a 4:4 HCN4:PEX5L stoichiometry; reduces the effects of cAMP on the voltage-dependence and rate of activation (By similarity). Interacts with IRAG1; regulates HCN4 channel activity (By similarity). Interacts with IRAG2; regulates HCN4 channel activity (By similarity).</text>
</comment>
<comment type="subcellular location">
    <subcellularLocation>
        <location evidence="8">Cell membrane</location>
        <topology evidence="4">Multi-pass membrane protein</topology>
    </subcellularLocation>
</comment>
<comment type="tissue specificity">
    <text evidence="7 8">Highly expressed in pyramidal and granule layer of the hippocampus, in thalamus anterior nucleus, in the supraoptic nucleus in hypothalamus, in cerebellum, and in trapezoid nuclei and superior olivary complex in the auditory system. Detected in a subset of elongated cells in taste buds.</text>
</comment>
<comment type="domain">
    <text evidence="4">Contains six transmembrane segments (S1-S6) and an intervening P-loop. The segment S4 is the voltage-sensor and is characterized by a series of positively charged amino acids at every third position, while the S5-S6 segments together with the P-loop form a centrally located pore of the channel. Contains a cyclic nucleotide-binding domain (CNBD) in their C-terminal region. The CNBD is connected to the pore forming transmembrane segment via the C-linker.</text>
</comment>
<comment type="domain">
    <text evidence="4">Contains a unique pocket located in the cytosolic C-terminal domain, identified as a likely binding site for di-cyclic nucleotides.</text>
</comment>
<comment type="PTM">
    <text evidence="4">S-palmitoylated.</text>
</comment>
<comment type="similarity">
    <text evidence="9">Belongs to the potassium channel HCN family.</text>
</comment>
<feature type="chain" id="PRO_0000054120" description="Potassium/sodium hyperpolarization-activated cyclic nucleotide-gated channel 4">
    <location>
        <begin position="1"/>
        <end position="1198"/>
    </location>
</feature>
<feature type="topological domain" description="Cytoplasmic" evidence="5">
    <location>
        <begin position="1"/>
        <end position="266"/>
    </location>
</feature>
<feature type="transmembrane region" description="Helical; Name=Segment S1" evidence="5">
    <location>
        <begin position="267"/>
        <end position="287"/>
    </location>
</feature>
<feature type="topological domain" description="Extracellular" evidence="5">
    <location>
        <begin position="288"/>
        <end position="293"/>
    </location>
</feature>
<feature type="transmembrane region" description="Helical; Name=Segment S2" evidence="5">
    <location>
        <begin position="294"/>
        <end position="314"/>
    </location>
</feature>
<feature type="topological domain" description="Cytoplasmic" evidence="5">
    <location>
        <begin position="315"/>
        <end position="340"/>
    </location>
</feature>
<feature type="transmembrane region" description="Helical; Name=Segment S3" evidence="5">
    <location>
        <begin position="341"/>
        <end position="361"/>
    </location>
</feature>
<feature type="topological domain" description="Extracellular" evidence="5">
    <location>
        <begin position="362"/>
        <end position="368"/>
    </location>
</feature>
<feature type="transmembrane region" description="Helical; Voltage-sensor; Name=Segment S4" evidence="5">
    <location>
        <begin position="369"/>
        <end position="389"/>
    </location>
</feature>
<feature type="topological domain" description="Cytoplasmic" evidence="5">
    <location>
        <begin position="390"/>
        <end position="420"/>
    </location>
</feature>
<feature type="transmembrane region" description="Helical; Name=Segment S5" evidence="5">
    <location>
        <begin position="421"/>
        <end position="441"/>
    </location>
</feature>
<feature type="topological domain" description="Extracellular" evidence="5">
    <location>
        <begin position="442"/>
        <end position="464"/>
    </location>
</feature>
<feature type="intramembrane region" description="Pore-forming; Name=Segment H5" evidence="5">
    <location>
        <begin position="465"/>
        <end position="486"/>
    </location>
</feature>
<feature type="topological domain" description="Extracellular" evidence="5">
    <location>
        <begin position="487"/>
        <end position="496"/>
    </location>
</feature>
<feature type="transmembrane region" description="Helical; Name=Segment S6" evidence="5">
    <location>
        <begin position="497"/>
        <end position="517"/>
    </location>
</feature>
<feature type="topological domain" description="Cytoplasmic" evidence="5">
    <location>
        <begin position="518"/>
        <end position="1198"/>
    </location>
</feature>
<feature type="region of interest" description="Disordered" evidence="6">
    <location>
        <begin position="25"/>
        <end position="183"/>
    </location>
</feature>
<feature type="region of interest" description="Involved in subunit assembly" evidence="1">
    <location>
        <begin position="209"/>
        <end position="260"/>
    </location>
</feature>
<feature type="region of interest" description="Disordered" evidence="6">
    <location>
        <begin position="804"/>
        <end position="1198"/>
    </location>
</feature>
<feature type="compositionally biased region" description="Acidic residues" evidence="6">
    <location>
        <begin position="26"/>
        <end position="36"/>
    </location>
</feature>
<feature type="compositionally biased region" description="Gly residues" evidence="6">
    <location>
        <begin position="105"/>
        <end position="118"/>
    </location>
</feature>
<feature type="compositionally biased region" description="Basic and acidic residues" evidence="6">
    <location>
        <begin position="121"/>
        <end position="132"/>
    </location>
</feature>
<feature type="compositionally biased region" description="Pro residues" evidence="6">
    <location>
        <begin position="164"/>
        <end position="174"/>
    </location>
</feature>
<feature type="compositionally biased region" description="Low complexity" evidence="6">
    <location>
        <begin position="831"/>
        <end position="856"/>
    </location>
</feature>
<feature type="compositionally biased region" description="Low complexity" evidence="6">
    <location>
        <begin position="866"/>
        <end position="880"/>
    </location>
</feature>
<feature type="compositionally biased region" description="Pro residues" evidence="6">
    <location>
        <begin position="881"/>
        <end position="894"/>
    </location>
</feature>
<feature type="compositionally biased region" description="Low complexity" evidence="6">
    <location>
        <begin position="895"/>
        <end position="905"/>
    </location>
</feature>
<feature type="compositionally biased region" description="Low complexity" evidence="6">
    <location>
        <begin position="913"/>
        <end position="937"/>
    </location>
</feature>
<feature type="compositionally biased region" description="Low complexity" evidence="6">
    <location>
        <begin position="965"/>
        <end position="985"/>
    </location>
</feature>
<feature type="compositionally biased region" description="Pro residues" evidence="6">
    <location>
        <begin position="1027"/>
        <end position="1040"/>
    </location>
</feature>
<feature type="compositionally biased region" description="Low complexity" evidence="6">
    <location>
        <begin position="1043"/>
        <end position="1054"/>
    </location>
</feature>
<feature type="compositionally biased region" description="Gly residues" evidence="6">
    <location>
        <begin position="1120"/>
        <end position="1132"/>
    </location>
</feature>
<feature type="binding site" evidence="4">
    <location>
        <position position="559"/>
    </location>
    <ligand>
        <name>3',5'-cyclic GMP</name>
        <dbReference type="ChEBI" id="CHEBI:57746"/>
    </ligand>
</feature>
<feature type="binding site" evidence="4">
    <location>
        <position position="562"/>
    </location>
    <ligand>
        <name>3',5'-cyclic GMP</name>
        <dbReference type="ChEBI" id="CHEBI:57746"/>
    </ligand>
</feature>
<feature type="binding site" evidence="4">
    <location>
        <position position="564"/>
    </location>
    <ligand>
        <name>3',5'-cyclic GMP</name>
        <dbReference type="ChEBI" id="CHEBI:57746"/>
    </ligand>
</feature>
<feature type="binding site" evidence="4">
    <location>
        <position position="566"/>
    </location>
    <ligand>
        <name>3',5'-cyclic GMP</name>
        <dbReference type="ChEBI" id="CHEBI:57746"/>
    </ligand>
</feature>
<feature type="binding site" evidence="4">
    <location>
        <position position="659"/>
    </location>
    <ligand>
        <name>3',5'-cyclic AMP</name>
        <dbReference type="ChEBI" id="CHEBI:58165"/>
    </ligand>
</feature>
<feature type="binding site" evidence="3">
    <location>
        <position position="660"/>
    </location>
    <ligand>
        <name>3',5'-cyclic AMP</name>
        <dbReference type="ChEBI" id="CHEBI:58165"/>
    </ligand>
</feature>
<feature type="binding site" evidence="4">
    <location>
        <position position="662"/>
    </location>
    <ligand>
        <name>3',5'-cyclic AMP</name>
        <dbReference type="ChEBI" id="CHEBI:58165"/>
    </ligand>
</feature>
<feature type="binding site" evidence="4">
    <location>
        <position position="669"/>
    </location>
    <ligand>
        <name>3',5'-cyclic AMP</name>
        <dbReference type="ChEBI" id="CHEBI:58165"/>
    </ligand>
</feature>
<feature type="binding site" evidence="4">
    <location>
        <position position="670"/>
    </location>
    <ligand>
        <name>3',5'-cyclic AMP</name>
        <dbReference type="ChEBI" id="CHEBI:58165"/>
    </ligand>
</feature>
<feature type="binding site" evidence="3">
    <location>
        <position position="673"/>
    </location>
    <ligand>
        <name>3',5'-cyclic AMP</name>
        <dbReference type="ChEBI" id="CHEBI:58165"/>
    </ligand>
</feature>
<feature type="binding site" evidence="4">
    <location>
        <position position="710"/>
    </location>
    <ligand>
        <name>3',5'-cyclic AMP</name>
        <dbReference type="ChEBI" id="CHEBI:58165"/>
    </ligand>
</feature>
<feature type="modified residue" description="Phosphoserine" evidence="10">
    <location>
        <position position="139"/>
    </location>
</feature>
<feature type="modified residue" description="Phosphoserine" evidence="2">
    <location>
        <position position="1103"/>
    </location>
</feature>
<feature type="modified residue" description="Phosphoserine" evidence="2">
    <location>
        <position position="1106"/>
    </location>
</feature>
<feature type="glycosylation site" description="N-linked (GlcNAc...) asparagine" evidence="5">
    <location>
        <position position="458"/>
    </location>
</feature>
<feature type="sequence conflict" description="In Ref. 2; AAF01493." evidence="9" ref="2">
    <original>I</original>
    <variation>V</variation>
    <location>
        <position position="404"/>
    </location>
</feature>